<feature type="chain" id="PRO_0000280597" description="LisH domain-containing protein ARMC9">
    <location>
        <begin position="1"/>
        <end position="665"/>
    </location>
</feature>
<feature type="domain" description="LisH" evidence="5">
    <location>
        <begin position="7"/>
        <end position="39"/>
    </location>
</feature>
<feature type="region of interest" description="Disordered" evidence="6">
    <location>
        <begin position="642"/>
        <end position="665"/>
    </location>
</feature>
<feature type="coiled-coil region" evidence="4">
    <location>
        <begin position="201"/>
        <end position="235"/>
    </location>
</feature>
<feature type="modified residue" description="Phosphoserine" evidence="2">
    <location>
        <position position="582"/>
    </location>
</feature>
<dbReference type="EMBL" id="CR860670">
    <property type="protein sequence ID" value="CAH92787.1"/>
    <property type="molecule type" value="mRNA"/>
</dbReference>
<dbReference type="RefSeq" id="NP_001126627.1">
    <property type="nucleotide sequence ID" value="NM_001133155.1"/>
</dbReference>
<dbReference type="SMR" id="Q5R629"/>
<dbReference type="STRING" id="9601.ENSPPYP00000014826"/>
<dbReference type="GeneID" id="100173624"/>
<dbReference type="KEGG" id="pon:100173624"/>
<dbReference type="CTD" id="80210"/>
<dbReference type="eggNOG" id="ENOG502QQ9W">
    <property type="taxonomic scope" value="Eukaryota"/>
</dbReference>
<dbReference type="InParanoid" id="Q5R629"/>
<dbReference type="OrthoDB" id="538223at2759"/>
<dbReference type="Proteomes" id="UP000001595">
    <property type="component" value="Unplaced"/>
</dbReference>
<dbReference type="GO" id="GO:0005814">
    <property type="term" value="C:centriole"/>
    <property type="evidence" value="ECO:0000250"/>
    <property type="project" value="UniProtKB"/>
</dbReference>
<dbReference type="GO" id="GO:0036064">
    <property type="term" value="C:ciliary basal body"/>
    <property type="evidence" value="ECO:0000250"/>
    <property type="project" value="UniProtKB"/>
</dbReference>
<dbReference type="GO" id="GO:0097542">
    <property type="term" value="C:ciliary tip"/>
    <property type="evidence" value="ECO:0000250"/>
    <property type="project" value="UniProtKB"/>
</dbReference>
<dbReference type="GO" id="GO:0005929">
    <property type="term" value="C:cilium"/>
    <property type="evidence" value="ECO:0000250"/>
    <property type="project" value="UniProtKB"/>
</dbReference>
<dbReference type="GO" id="GO:0005737">
    <property type="term" value="C:cytoplasm"/>
    <property type="evidence" value="ECO:0007669"/>
    <property type="project" value="UniProtKB-KW"/>
</dbReference>
<dbReference type="GO" id="GO:0060271">
    <property type="term" value="P:cilium assembly"/>
    <property type="evidence" value="ECO:0000250"/>
    <property type="project" value="UniProtKB"/>
</dbReference>
<dbReference type="GO" id="GO:0045880">
    <property type="term" value="P:positive regulation of smoothened signaling pathway"/>
    <property type="evidence" value="ECO:0000250"/>
    <property type="project" value="UniProtKB"/>
</dbReference>
<dbReference type="FunFam" id="1.25.10.10:FF:000124">
    <property type="entry name" value="lisH domain-containing protein ARMC9 isoform X1"/>
    <property type="match status" value="1"/>
</dbReference>
<dbReference type="Gene3D" id="1.25.10.10">
    <property type="entry name" value="Leucine-rich Repeat Variant"/>
    <property type="match status" value="1"/>
</dbReference>
<dbReference type="InterPro" id="IPR011989">
    <property type="entry name" value="ARM-like"/>
</dbReference>
<dbReference type="InterPro" id="IPR016024">
    <property type="entry name" value="ARM-type_fold"/>
</dbReference>
<dbReference type="InterPro" id="IPR040369">
    <property type="entry name" value="ARMC9"/>
</dbReference>
<dbReference type="InterPro" id="IPR048959">
    <property type="entry name" value="ARMC9_ARM_dom"/>
</dbReference>
<dbReference type="InterPro" id="IPR056327">
    <property type="entry name" value="ARMC9_CTLH-like_dom"/>
</dbReference>
<dbReference type="InterPro" id="IPR048957">
    <property type="entry name" value="ARMC9_LisH"/>
</dbReference>
<dbReference type="InterPro" id="IPR006594">
    <property type="entry name" value="LisH"/>
</dbReference>
<dbReference type="PANTHER" id="PTHR14881">
    <property type="entry name" value="LISH DOMAIN-CONTAINING PROTEIN ARMC9"/>
    <property type="match status" value="1"/>
</dbReference>
<dbReference type="PANTHER" id="PTHR14881:SF4">
    <property type="entry name" value="LISH DOMAIN-CONTAINING PROTEIN ARMC9"/>
    <property type="match status" value="1"/>
</dbReference>
<dbReference type="Pfam" id="PF21050">
    <property type="entry name" value="ARMC9_ARM"/>
    <property type="match status" value="1"/>
</dbReference>
<dbReference type="Pfam" id="PF21051">
    <property type="entry name" value="ARMC9_LisH"/>
    <property type="match status" value="1"/>
</dbReference>
<dbReference type="Pfam" id="PF23138">
    <property type="entry name" value="CTLH_Armc9"/>
    <property type="match status" value="1"/>
</dbReference>
<dbReference type="SMART" id="SM00667">
    <property type="entry name" value="LisH"/>
    <property type="match status" value="1"/>
</dbReference>
<dbReference type="SUPFAM" id="SSF48371">
    <property type="entry name" value="ARM repeat"/>
    <property type="match status" value="1"/>
</dbReference>
<dbReference type="PROSITE" id="PS50896">
    <property type="entry name" value="LISH"/>
    <property type="match status" value="1"/>
</dbReference>
<reference key="1">
    <citation type="submission" date="2004-11" db="EMBL/GenBank/DDBJ databases">
        <authorList>
            <consortium name="The German cDNA consortium"/>
        </authorList>
    </citation>
    <scope>NUCLEOTIDE SEQUENCE [LARGE SCALE MRNA]</scope>
    <source>
        <tissue>Brain cortex</tissue>
    </source>
</reference>
<evidence type="ECO:0000250" key="1">
    <source>
        <dbReference type="UniProtKB" id="E7F187"/>
    </source>
</evidence>
<evidence type="ECO:0000250" key="2">
    <source>
        <dbReference type="UniProtKB" id="Q7Z3E5"/>
    </source>
</evidence>
<evidence type="ECO:0000250" key="3">
    <source>
        <dbReference type="UniProtKB" id="Q9D2I5"/>
    </source>
</evidence>
<evidence type="ECO:0000255" key="4"/>
<evidence type="ECO:0000255" key="5">
    <source>
        <dbReference type="PROSITE-ProRule" id="PRU00126"/>
    </source>
</evidence>
<evidence type="ECO:0000256" key="6">
    <source>
        <dbReference type="SAM" id="MobiDB-lite"/>
    </source>
</evidence>
<organism>
    <name type="scientific">Pongo abelii</name>
    <name type="common">Sumatran orangutan</name>
    <name type="synonym">Pongo pygmaeus abelii</name>
    <dbReference type="NCBI Taxonomy" id="9601"/>
    <lineage>
        <taxon>Eukaryota</taxon>
        <taxon>Metazoa</taxon>
        <taxon>Chordata</taxon>
        <taxon>Craniata</taxon>
        <taxon>Vertebrata</taxon>
        <taxon>Euteleostomi</taxon>
        <taxon>Mammalia</taxon>
        <taxon>Eutheria</taxon>
        <taxon>Euarchontoglires</taxon>
        <taxon>Primates</taxon>
        <taxon>Haplorrhini</taxon>
        <taxon>Catarrhini</taxon>
        <taxon>Hominidae</taxon>
        <taxon>Pongo</taxon>
    </lineage>
</organism>
<comment type="function">
    <text evidence="1 2 3">Involved in ciliogenesis. It is required for appropriate acetylation and polyglutamylation of ciliary microtubules, and regulation of cilium length (By similarity). Acts as a positive regulator of hedgehog (Hh)signaling (By similarity). May participate in the trafficking and/or retention of GLI2 and GLI3 proteins at the ciliary tip (By similarity).</text>
</comment>
<comment type="subunit">
    <text evidence="2">Interacts with TOGARAM1, CCDC66, CEP104, CSPP1 and CEP290. Interacts with NDUFAF2 (By similarity).</text>
</comment>
<comment type="subcellular location">
    <subcellularLocation>
        <location evidence="2">Cytoplasm</location>
        <location evidence="2">Cytoskeleton</location>
        <location evidence="2">Cilium basal body</location>
    </subcellularLocation>
    <subcellularLocation>
        <location evidence="3">Cell projection</location>
        <location evidence="3">Cilium</location>
    </subcellularLocation>
    <subcellularLocation>
        <location evidence="2">Cytoplasm</location>
        <location evidence="2">Cytoskeleton</location>
        <location evidence="2">Microtubule organizing center</location>
        <location evidence="2">Centrosome</location>
        <location evidence="2">Centriole</location>
    </subcellularLocation>
    <text evidence="2 3">Localized to the proximal region in cilia. Stimulation of Hh signaling leads to redistribution of ARMC9 toward the ciliary tip within 6 hours, follow by a gradual return to its original proximal location (By similarity). Localizes to the daughter centriole of the primary cilium in RPE1 cells (By similarity).</text>
</comment>
<accession>Q5R629</accession>
<proteinExistence type="evidence at transcript level"/>
<name>ARMC9_PONAB</name>
<sequence>MGDILAHESELLGLVKEYLDFAEFEDTLKTFSKECKIKGKPLCKTVGGSFRDSKSLTIQKDLVTAFDNGDQKVFFNLWEEHIPSSVRDGDSFAQRLEFYLHIHFAIYLLKYSVGRPDKEELDEKISYFKTYLETKGAALSQTTEFLPFYALPFVPNPMVHPSFKELFQDSWTPELKMKLEKFLALIFKASNTPKLLTIYKENGQSNKEMLQQLHQQLVEAERRSMTYLKRYNKIQADYHNLIGVTAELVDSLEATVSGKMITPEYLQSVCVRLFSNQMRQSLAHSVDFTRPGTASTMLRASLAPVKLKDVPLLPSLDYEKLKKDLILGSDRLKAFLLQALRWRLTTSHPGEQRETVLQAYISNDLLDCYSHNQRSVLQLLHSKSDVVRQYMARLINAFASLAEGRLYLAQNTKVLRMLEGRLKEEDKDIITRENVLGALQKFSLRRPLQTAMIQDGLIFWLVDVLKDPDCLSDYTLEYSVALLMNLCLRSTGKNMCAKVAGLVLKVLSDLLGHENHEIQPYVSGALYSILSVPSIREEARAMGMEDILRCFIKEGNAEMIRQIEFIIKQLNSEELPDGVLESDDDEDEDDEEDHDIMEADLDKDELIQPQLGELSGEKLLTTEYLGIMTNTGKMRRKGLANVQWSGDEPLQRPVTPGGHRNGYPV</sequence>
<gene>
    <name type="primary">ARMC9</name>
</gene>
<protein>
    <recommendedName>
        <fullName>LisH domain-containing protein ARMC9</fullName>
    </recommendedName>
</protein>
<keyword id="KW-0966">Cell projection</keyword>
<keyword id="KW-0970">Cilium biogenesis/degradation</keyword>
<keyword id="KW-0175">Coiled coil</keyword>
<keyword id="KW-0963">Cytoplasm</keyword>
<keyword id="KW-0206">Cytoskeleton</keyword>
<keyword id="KW-0597">Phosphoprotein</keyword>
<keyword id="KW-1185">Reference proteome</keyword>